<evidence type="ECO:0000255" key="1">
    <source>
        <dbReference type="HAMAP-Rule" id="MF_01656"/>
    </source>
</evidence>
<evidence type="ECO:0000269" key="2">
    <source>
    </source>
</evidence>
<evidence type="ECO:0000305" key="3"/>
<comment type="function">
    <text evidence="2">Catalyzes the retro-aldol cleavage of 4-hydroxy-2-oxopentanoate to pyruvate and acetaldehyde. Is involved in the meta-cleavage pathway for the degradation of 2-aminophenol.</text>
</comment>
<comment type="catalytic activity">
    <reaction evidence="1">
        <text>(S)-4-hydroxy-2-oxopentanoate = acetaldehyde + pyruvate</text>
        <dbReference type="Rhea" id="RHEA:22624"/>
        <dbReference type="ChEBI" id="CHEBI:15343"/>
        <dbReference type="ChEBI" id="CHEBI:15361"/>
        <dbReference type="ChEBI" id="CHEBI:73143"/>
        <dbReference type="EC" id="4.1.3.39"/>
    </reaction>
</comment>
<comment type="similarity">
    <text evidence="1 3">Belongs to the 4-hydroxy-2-oxovalerate aldolase family.</text>
</comment>
<name>HOA_PSESP</name>
<proteinExistence type="evidence at protein level"/>
<protein>
    <recommendedName>
        <fullName evidence="1">4-hydroxy-2-oxovalerate aldolase</fullName>
        <shortName evidence="1">HOA</shortName>
        <ecNumber evidence="1">4.1.3.39</ecNumber>
    </recommendedName>
    <alternativeName>
        <fullName evidence="1">4-hydroxy-2-keto-pentanoic acid aldolase</fullName>
    </alternativeName>
    <alternativeName>
        <fullName evidence="1">4-hydroxy-2-oxopentanoate aldolase</fullName>
    </alternativeName>
</protein>
<feature type="chain" id="PRO_0000383026" description="4-hydroxy-2-oxovalerate aldolase">
    <location>
        <begin position="1"/>
        <end position="343"/>
    </location>
</feature>
<feature type="domain" description="Pyruvate carboxyltransferase" evidence="1">
    <location>
        <begin position="8"/>
        <end position="260"/>
    </location>
</feature>
<feature type="active site" description="Proton acceptor" evidence="1">
    <location>
        <position position="20"/>
    </location>
</feature>
<feature type="binding site" evidence="1">
    <location>
        <begin position="16"/>
        <end position="17"/>
    </location>
    <ligand>
        <name>substrate</name>
    </ligand>
</feature>
<feature type="binding site" evidence="1">
    <location>
        <position position="17"/>
    </location>
    <ligand>
        <name>Mn(2+)</name>
        <dbReference type="ChEBI" id="CHEBI:29035"/>
    </ligand>
</feature>
<feature type="binding site" evidence="1">
    <location>
        <position position="170"/>
    </location>
    <ligand>
        <name>substrate</name>
    </ligand>
</feature>
<feature type="binding site" evidence="1">
    <location>
        <position position="199"/>
    </location>
    <ligand>
        <name>Mn(2+)</name>
        <dbReference type="ChEBI" id="CHEBI:29035"/>
    </ligand>
</feature>
<feature type="binding site" evidence="1">
    <location>
        <position position="199"/>
    </location>
    <ligand>
        <name>substrate</name>
    </ligand>
</feature>
<feature type="binding site" evidence="1">
    <location>
        <position position="201"/>
    </location>
    <ligand>
        <name>Mn(2+)</name>
        <dbReference type="ChEBI" id="CHEBI:29035"/>
    </ligand>
</feature>
<feature type="binding site" evidence="1">
    <location>
        <position position="290"/>
    </location>
    <ligand>
        <name>substrate</name>
    </ligand>
</feature>
<feature type="site" description="Transition state stabilizer" evidence="1">
    <location>
        <position position="16"/>
    </location>
</feature>
<accession>Q9KWS0</accession>
<dbReference type="EC" id="4.1.3.39" evidence="1"/>
<dbReference type="EMBL" id="AB020521">
    <property type="protein sequence ID" value="BAB03538.1"/>
    <property type="molecule type" value="Genomic_DNA"/>
</dbReference>
<dbReference type="PDB" id="8IH7">
    <property type="method" value="X-ray"/>
    <property type="resolution" value="2.48 A"/>
    <property type="chains" value="A/C=1-343"/>
</dbReference>
<dbReference type="PDBsum" id="8IH7"/>
<dbReference type="SMR" id="Q9KWS0"/>
<dbReference type="GO" id="GO:0003852">
    <property type="term" value="F:2-isopropylmalate synthase activity"/>
    <property type="evidence" value="ECO:0007669"/>
    <property type="project" value="TreeGrafter"/>
</dbReference>
<dbReference type="GO" id="GO:0008701">
    <property type="term" value="F:4-hydroxy-2-oxovalerate aldolase activity"/>
    <property type="evidence" value="ECO:0007669"/>
    <property type="project" value="UniProtKB-UniRule"/>
</dbReference>
<dbReference type="GO" id="GO:0030145">
    <property type="term" value="F:manganese ion binding"/>
    <property type="evidence" value="ECO:0007669"/>
    <property type="project" value="UniProtKB-UniRule"/>
</dbReference>
<dbReference type="GO" id="GO:0009056">
    <property type="term" value="P:catabolic process"/>
    <property type="evidence" value="ECO:0007669"/>
    <property type="project" value="UniProtKB-KW"/>
</dbReference>
<dbReference type="GO" id="GO:0009098">
    <property type="term" value="P:L-leucine biosynthetic process"/>
    <property type="evidence" value="ECO:0007669"/>
    <property type="project" value="TreeGrafter"/>
</dbReference>
<dbReference type="CDD" id="cd07943">
    <property type="entry name" value="DRE_TIM_HOA"/>
    <property type="match status" value="1"/>
</dbReference>
<dbReference type="FunFam" id="1.10.8.60:FF:000042">
    <property type="entry name" value="4-hydroxy-2-oxovalerate aldolase"/>
    <property type="match status" value="1"/>
</dbReference>
<dbReference type="Gene3D" id="1.10.8.60">
    <property type="match status" value="1"/>
</dbReference>
<dbReference type="Gene3D" id="3.20.20.70">
    <property type="entry name" value="Aldolase class I"/>
    <property type="match status" value="1"/>
</dbReference>
<dbReference type="HAMAP" id="MF_01656">
    <property type="entry name" value="HOA"/>
    <property type="match status" value="1"/>
</dbReference>
<dbReference type="InterPro" id="IPR050073">
    <property type="entry name" value="2-IPM_HCS-like"/>
</dbReference>
<dbReference type="InterPro" id="IPR017629">
    <property type="entry name" value="4OH_2_O-val_aldolase"/>
</dbReference>
<dbReference type="InterPro" id="IPR013785">
    <property type="entry name" value="Aldolase_TIM"/>
</dbReference>
<dbReference type="InterPro" id="IPR012425">
    <property type="entry name" value="DmpG_comm"/>
</dbReference>
<dbReference type="InterPro" id="IPR035685">
    <property type="entry name" value="DRE_TIM_HOA"/>
</dbReference>
<dbReference type="InterPro" id="IPR000891">
    <property type="entry name" value="PYR_CT"/>
</dbReference>
<dbReference type="NCBIfam" id="TIGR03217">
    <property type="entry name" value="4OH_2_O_val_ald"/>
    <property type="match status" value="1"/>
</dbReference>
<dbReference type="NCBIfam" id="NF006049">
    <property type="entry name" value="PRK08195.1"/>
    <property type="match status" value="1"/>
</dbReference>
<dbReference type="PANTHER" id="PTHR10277:SF9">
    <property type="entry name" value="2-ISOPROPYLMALATE SYNTHASE 1, CHLOROPLASTIC-RELATED"/>
    <property type="match status" value="1"/>
</dbReference>
<dbReference type="PANTHER" id="PTHR10277">
    <property type="entry name" value="HOMOCITRATE SYNTHASE-RELATED"/>
    <property type="match status" value="1"/>
</dbReference>
<dbReference type="Pfam" id="PF07836">
    <property type="entry name" value="DmpG_comm"/>
    <property type="match status" value="1"/>
</dbReference>
<dbReference type="Pfam" id="PF00682">
    <property type="entry name" value="HMGL-like"/>
    <property type="match status" value="1"/>
</dbReference>
<dbReference type="SUPFAM" id="SSF51569">
    <property type="entry name" value="Aldolase"/>
    <property type="match status" value="1"/>
</dbReference>
<dbReference type="SUPFAM" id="SSF89000">
    <property type="entry name" value="post-HMGL domain-like"/>
    <property type="match status" value="1"/>
</dbReference>
<dbReference type="PROSITE" id="PS50991">
    <property type="entry name" value="PYR_CT"/>
    <property type="match status" value="1"/>
</dbReference>
<sequence>MIDQAKKIYISDVTLRDGMHAIRHRYTLNHVSQIARALDEAGVDSIEVAHGDGLKGSSFNYGFGAYSDLEWISAAAEAVKQAKIATLLLPGIGTVHDLREAYDAGARVVRVATHCTEADVSRQHIEYARGLGMDTVGFLMMSHMQTPVGLAQQAKLMENYGAQCIYVVDSGGAMNMWDIAERFKALKDVLDPATQTGMHAHHNLSLGVANSLVALENGCDRVDASLTGMGAGAGNAPLEVFIAAAERMGLNHGCDVKKLINAAEDIVRPLQERPVRVDRETLALGYAGVYSSFLRHAETAAKKYNLSAFDILVELGKRRMIGGQEDMIVDVALDMAKGRVLPT</sequence>
<gene>
    <name type="primary">amnG</name>
</gene>
<keyword id="KW-0002">3D-structure</keyword>
<keyword id="KW-0058">Aromatic hydrocarbons catabolism</keyword>
<keyword id="KW-0456">Lyase</keyword>
<keyword id="KW-0464">Manganese</keyword>
<keyword id="KW-0479">Metal-binding</keyword>
<reference key="1">
    <citation type="journal article" date="1997" name="J. Biol. Chem.">
        <title>Novel genes encoding 2-aminophenol 1,6-dioxygenase from Pseudomonas species AP-3 growing on 2-aminophenol and catalytic properties of the purified enzyme.</title>
        <authorList>
            <person name="Takenaka S."/>
            <person name="Murakami S."/>
            <person name="Shinke R."/>
            <person name="Hatakeyama K."/>
            <person name="Yukawa H."/>
            <person name="Aoki K."/>
        </authorList>
    </citation>
    <scope>NUCLEOTIDE SEQUENCE [GENOMIC DNA]</scope>
    <scope>FUNCTION</scope>
    <source>
        <strain>AP-3</strain>
    </source>
</reference>
<reference key="2">
    <citation type="journal article" date="2000" name="Arch. Microbiol.">
        <title>Complete nucleotide sequence and functional analysis of the genes for 2-aminophenol metabolism from Pseudomonas sp. AP-3.</title>
        <authorList>
            <person name="Takenaka S."/>
            <person name="Murakami S."/>
            <person name="Kim Y.J."/>
            <person name="Aoki K."/>
        </authorList>
    </citation>
    <scope>NUCLEOTIDE SEQUENCE [GENOMIC DNA]</scope>
    <source>
        <strain>AP-3</strain>
    </source>
</reference>
<organism>
    <name type="scientific">Pseudomonas sp</name>
    <dbReference type="NCBI Taxonomy" id="306"/>
    <lineage>
        <taxon>Bacteria</taxon>
        <taxon>Pseudomonadati</taxon>
        <taxon>Pseudomonadota</taxon>
        <taxon>Gammaproteobacteria</taxon>
        <taxon>Pseudomonadales</taxon>
        <taxon>Pseudomonadaceae</taxon>
        <taxon>Pseudomonas</taxon>
    </lineage>
</organism>